<sequence length="132" mass="15048">MARILGVDIPNDKRVVISLTYIFGIGKSTSQQILKLANIDENIRVKDLADEQIAEIRRVALNFVKANGEKLQLEGDLRRTVAMDIKRLMEIGSYRGIRHRRGLPVRGQRTKTNARTRKGPRKTVANKKIETR</sequence>
<organism>
    <name type="scientific">Ureaplasma parvum serovar 3 (strain ATCC 27815 / 27 / NCTC 11736)</name>
    <dbReference type="NCBI Taxonomy" id="505682"/>
    <lineage>
        <taxon>Bacteria</taxon>
        <taxon>Bacillati</taxon>
        <taxon>Mycoplasmatota</taxon>
        <taxon>Mycoplasmoidales</taxon>
        <taxon>Mycoplasmoidaceae</taxon>
        <taxon>Ureaplasma</taxon>
    </lineage>
</organism>
<feature type="chain" id="PRO_1000086268" description="Small ribosomal subunit protein uS13">
    <location>
        <begin position="1"/>
        <end position="132"/>
    </location>
</feature>
<feature type="region of interest" description="Disordered" evidence="2">
    <location>
        <begin position="101"/>
        <end position="132"/>
    </location>
</feature>
<feature type="compositionally biased region" description="Basic residues" evidence="2">
    <location>
        <begin position="101"/>
        <end position="125"/>
    </location>
</feature>
<accession>B1AIP4</accession>
<keyword id="KW-0687">Ribonucleoprotein</keyword>
<keyword id="KW-0689">Ribosomal protein</keyword>
<keyword id="KW-0694">RNA-binding</keyword>
<keyword id="KW-0699">rRNA-binding</keyword>
<keyword id="KW-0820">tRNA-binding</keyword>
<evidence type="ECO:0000255" key="1">
    <source>
        <dbReference type="HAMAP-Rule" id="MF_01315"/>
    </source>
</evidence>
<evidence type="ECO:0000256" key="2">
    <source>
        <dbReference type="SAM" id="MobiDB-lite"/>
    </source>
</evidence>
<evidence type="ECO:0000305" key="3"/>
<gene>
    <name evidence="1" type="primary">rpsM</name>
    <name type="ordered locus">UPA3_0263</name>
</gene>
<reference key="1">
    <citation type="submission" date="2008-02" db="EMBL/GenBank/DDBJ databases">
        <title>Genome sequence of Ureaplasma parvum serovar 3.</title>
        <authorList>
            <person name="Methe B.A."/>
            <person name="Glass J."/>
            <person name="Waites K."/>
            <person name="Shrivastava S."/>
        </authorList>
    </citation>
    <scope>NUCLEOTIDE SEQUENCE [LARGE SCALE GENOMIC DNA]</scope>
    <source>
        <strain>ATCC 27815 / 27 / NCTC 11736</strain>
    </source>
</reference>
<protein>
    <recommendedName>
        <fullName evidence="1">Small ribosomal subunit protein uS13</fullName>
    </recommendedName>
    <alternativeName>
        <fullName evidence="3">30S ribosomal protein S13</fullName>
    </alternativeName>
</protein>
<name>RS13_UREP2</name>
<comment type="function">
    <text evidence="1">Located at the top of the head of the 30S subunit, it contacts several helices of the 16S rRNA. In the 70S ribosome it contacts the 23S rRNA (bridge B1a) and protein L5 of the 50S subunit (bridge B1b), connecting the 2 subunits; these bridges are implicated in subunit movement. Contacts the tRNAs in the A and P-sites.</text>
</comment>
<comment type="subunit">
    <text evidence="1">Part of the 30S ribosomal subunit. Forms a loose heterodimer with protein S19. Forms two bridges to the 50S subunit in the 70S ribosome.</text>
</comment>
<comment type="similarity">
    <text evidence="1">Belongs to the universal ribosomal protein uS13 family.</text>
</comment>
<dbReference type="EMBL" id="CP000942">
    <property type="protein sequence ID" value="ACA32920.1"/>
    <property type="molecule type" value="Genomic_DNA"/>
</dbReference>
<dbReference type="RefSeq" id="WP_006688863.1">
    <property type="nucleotide sequence ID" value="NC_010503.1"/>
</dbReference>
<dbReference type="SMR" id="B1AIP4"/>
<dbReference type="GeneID" id="29672542"/>
<dbReference type="KEGG" id="upa:UPA3_0263"/>
<dbReference type="HOGENOM" id="CLU_103849_1_2_14"/>
<dbReference type="Proteomes" id="UP000002162">
    <property type="component" value="Chromosome"/>
</dbReference>
<dbReference type="GO" id="GO:0005829">
    <property type="term" value="C:cytosol"/>
    <property type="evidence" value="ECO:0007669"/>
    <property type="project" value="TreeGrafter"/>
</dbReference>
<dbReference type="GO" id="GO:0015935">
    <property type="term" value="C:small ribosomal subunit"/>
    <property type="evidence" value="ECO:0007669"/>
    <property type="project" value="TreeGrafter"/>
</dbReference>
<dbReference type="GO" id="GO:0019843">
    <property type="term" value="F:rRNA binding"/>
    <property type="evidence" value="ECO:0007669"/>
    <property type="project" value="UniProtKB-UniRule"/>
</dbReference>
<dbReference type="GO" id="GO:0003735">
    <property type="term" value="F:structural constituent of ribosome"/>
    <property type="evidence" value="ECO:0007669"/>
    <property type="project" value="InterPro"/>
</dbReference>
<dbReference type="GO" id="GO:0000049">
    <property type="term" value="F:tRNA binding"/>
    <property type="evidence" value="ECO:0007669"/>
    <property type="project" value="UniProtKB-UniRule"/>
</dbReference>
<dbReference type="GO" id="GO:0006412">
    <property type="term" value="P:translation"/>
    <property type="evidence" value="ECO:0007669"/>
    <property type="project" value="UniProtKB-UniRule"/>
</dbReference>
<dbReference type="FunFam" id="1.10.8.50:FF:000001">
    <property type="entry name" value="30S ribosomal protein S13"/>
    <property type="match status" value="1"/>
</dbReference>
<dbReference type="FunFam" id="4.10.910.10:FF:000001">
    <property type="entry name" value="30S ribosomal protein S13"/>
    <property type="match status" value="1"/>
</dbReference>
<dbReference type="Gene3D" id="1.10.8.50">
    <property type="match status" value="1"/>
</dbReference>
<dbReference type="Gene3D" id="4.10.910.10">
    <property type="entry name" value="30s ribosomal protein s13, domain 2"/>
    <property type="match status" value="1"/>
</dbReference>
<dbReference type="HAMAP" id="MF_01315">
    <property type="entry name" value="Ribosomal_uS13"/>
    <property type="match status" value="1"/>
</dbReference>
<dbReference type="InterPro" id="IPR027437">
    <property type="entry name" value="Rbsml_uS13_C"/>
</dbReference>
<dbReference type="InterPro" id="IPR001892">
    <property type="entry name" value="Ribosomal_uS13"/>
</dbReference>
<dbReference type="InterPro" id="IPR010979">
    <property type="entry name" value="Ribosomal_uS13-like_H2TH"/>
</dbReference>
<dbReference type="InterPro" id="IPR019980">
    <property type="entry name" value="Ribosomal_uS13_bac-type"/>
</dbReference>
<dbReference type="InterPro" id="IPR018269">
    <property type="entry name" value="Ribosomal_uS13_CS"/>
</dbReference>
<dbReference type="NCBIfam" id="TIGR03631">
    <property type="entry name" value="uS13_bact"/>
    <property type="match status" value="1"/>
</dbReference>
<dbReference type="PANTHER" id="PTHR10871">
    <property type="entry name" value="30S RIBOSOMAL PROTEIN S13/40S RIBOSOMAL PROTEIN S18"/>
    <property type="match status" value="1"/>
</dbReference>
<dbReference type="PANTHER" id="PTHR10871:SF1">
    <property type="entry name" value="SMALL RIBOSOMAL SUBUNIT PROTEIN US13M"/>
    <property type="match status" value="1"/>
</dbReference>
<dbReference type="Pfam" id="PF00416">
    <property type="entry name" value="Ribosomal_S13"/>
    <property type="match status" value="1"/>
</dbReference>
<dbReference type="PIRSF" id="PIRSF002134">
    <property type="entry name" value="Ribosomal_S13"/>
    <property type="match status" value="1"/>
</dbReference>
<dbReference type="SUPFAM" id="SSF46946">
    <property type="entry name" value="S13-like H2TH domain"/>
    <property type="match status" value="1"/>
</dbReference>
<dbReference type="PROSITE" id="PS00646">
    <property type="entry name" value="RIBOSOMAL_S13_1"/>
    <property type="match status" value="1"/>
</dbReference>
<dbReference type="PROSITE" id="PS50159">
    <property type="entry name" value="RIBOSOMAL_S13_2"/>
    <property type="match status" value="1"/>
</dbReference>
<proteinExistence type="inferred from homology"/>